<organism>
    <name type="scientific">Legionella pneumophila (strain Corby)</name>
    <dbReference type="NCBI Taxonomy" id="400673"/>
    <lineage>
        <taxon>Bacteria</taxon>
        <taxon>Pseudomonadati</taxon>
        <taxon>Pseudomonadota</taxon>
        <taxon>Gammaproteobacteria</taxon>
        <taxon>Legionellales</taxon>
        <taxon>Legionellaceae</taxon>
        <taxon>Legionella</taxon>
    </lineage>
</organism>
<accession>A5IHS4</accession>
<evidence type="ECO:0000255" key="1">
    <source>
        <dbReference type="HAMAP-Rule" id="MF_01318"/>
    </source>
</evidence>
<evidence type="ECO:0000305" key="2"/>
<feature type="chain" id="PRO_0000308036" description="Large ribosomal subunit protein uL1">
    <location>
        <begin position="1"/>
        <end position="231"/>
    </location>
</feature>
<gene>
    <name evidence="1" type="primary">rplA</name>
    <name type="ordered locus">LPC_3024</name>
</gene>
<reference key="1">
    <citation type="submission" date="2006-11" db="EMBL/GenBank/DDBJ databases">
        <title>Identification and characterization of a new conjugation/ type IVA secretion system (trb/tra) of L. pneumophila Corby localized on a mobile genomic island.</title>
        <authorList>
            <person name="Gloeckner G."/>
            <person name="Albert-Weissenberger C."/>
            <person name="Weinmann E."/>
            <person name="Jacobi S."/>
            <person name="Schunder E."/>
            <person name="Steinert M."/>
            <person name="Buchrieser C."/>
            <person name="Hacker J."/>
            <person name="Heuner K."/>
        </authorList>
    </citation>
    <scope>NUCLEOTIDE SEQUENCE [LARGE SCALE GENOMIC DNA]</scope>
    <source>
        <strain>Corby</strain>
    </source>
</reference>
<protein>
    <recommendedName>
        <fullName evidence="1">Large ribosomal subunit protein uL1</fullName>
    </recommendedName>
    <alternativeName>
        <fullName evidence="2">50S ribosomal protein L1</fullName>
    </alternativeName>
</protein>
<name>RL1_LEGPC</name>
<keyword id="KW-0678">Repressor</keyword>
<keyword id="KW-0687">Ribonucleoprotein</keyword>
<keyword id="KW-0689">Ribosomal protein</keyword>
<keyword id="KW-0694">RNA-binding</keyword>
<keyword id="KW-0699">rRNA-binding</keyword>
<keyword id="KW-0810">Translation regulation</keyword>
<keyword id="KW-0820">tRNA-binding</keyword>
<proteinExistence type="inferred from homology"/>
<comment type="function">
    <text evidence="1">Binds directly to 23S rRNA. The L1 stalk is quite mobile in the ribosome, and is involved in E site tRNA release.</text>
</comment>
<comment type="function">
    <text evidence="1">Protein L1 is also a translational repressor protein, it controls the translation of the L11 operon by binding to its mRNA.</text>
</comment>
<comment type="subunit">
    <text evidence="1">Part of the 50S ribosomal subunit.</text>
</comment>
<comment type="similarity">
    <text evidence="1">Belongs to the universal ribosomal protein uL1 family.</text>
</comment>
<dbReference type="EMBL" id="CP000675">
    <property type="protein sequence ID" value="ABQ56924.1"/>
    <property type="molecule type" value="Genomic_DNA"/>
</dbReference>
<dbReference type="RefSeq" id="WP_010946070.1">
    <property type="nucleotide sequence ID" value="NZ_JAPMSS010000006.1"/>
</dbReference>
<dbReference type="SMR" id="A5IHS4"/>
<dbReference type="GeneID" id="57034322"/>
<dbReference type="KEGG" id="lpc:LPC_3024"/>
<dbReference type="HOGENOM" id="CLU_062853_0_0_6"/>
<dbReference type="GO" id="GO:0022625">
    <property type="term" value="C:cytosolic large ribosomal subunit"/>
    <property type="evidence" value="ECO:0007669"/>
    <property type="project" value="TreeGrafter"/>
</dbReference>
<dbReference type="GO" id="GO:0019843">
    <property type="term" value="F:rRNA binding"/>
    <property type="evidence" value="ECO:0007669"/>
    <property type="project" value="UniProtKB-UniRule"/>
</dbReference>
<dbReference type="GO" id="GO:0003735">
    <property type="term" value="F:structural constituent of ribosome"/>
    <property type="evidence" value="ECO:0007669"/>
    <property type="project" value="InterPro"/>
</dbReference>
<dbReference type="GO" id="GO:0000049">
    <property type="term" value="F:tRNA binding"/>
    <property type="evidence" value="ECO:0007669"/>
    <property type="project" value="UniProtKB-KW"/>
</dbReference>
<dbReference type="GO" id="GO:0006417">
    <property type="term" value="P:regulation of translation"/>
    <property type="evidence" value="ECO:0007669"/>
    <property type="project" value="UniProtKB-KW"/>
</dbReference>
<dbReference type="GO" id="GO:0006412">
    <property type="term" value="P:translation"/>
    <property type="evidence" value="ECO:0007669"/>
    <property type="project" value="UniProtKB-UniRule"/>
</dbReference>
<dbReference type="CDD" id="cd00403">
    <property type="entry name" value="Ribosomal_L1"/>
    <property type="match status" value="1"/>
</dbReference>
<dbReference type="FunFam" id="3.40.50.790:FF:000001">
    <property type="entry name" value="50S ribosomal protein L1"/>
    <property type="match status" value="1"/>
</dbReference>
<dbReference type="Gene3D" id="3.30.190.20">
    <property type="match status" value="1"/>
</dbReference>
<dbReference type="Gene3D" id="3.40.50.790">
    <property type="match status" value="1"/>
</dbReference>
<dbReference type="HAMAP" id="MF_01318_B">
    <property type="entry name" value="Ribosomal_uL1_B"/>
    <property type="match status" value="1"/>
</dbReference>
<dbReference type="InterPro" id="IPR005878">
    <property type="entry name" value="Ribosom_uL1_bac-type"/>
</dbReference>
<dbReference type="InterPro" id="IPR002143">
    <property type="entry name" value="Ribosomal_uL1"/>
</dbReference>
<dbReference type="InterPro" id="IPR023674">
    <property type="entry name" value="Ribosomal_uL1-like"/>
</dbReference>
<dbReference type="InterPro" id="IPR028364">
    <property type="entry name" value="Ribosomal_uL1/biogenesis"/>
</dbReference>
<dbReference type="InterPro" id="IPR016095">
    <property type="entry name" value="Ribosomal_uL1_3-a/b-sand"/>
</dbReference>
<dbReference type="InterPro" id="IPR023673">
    <property type="entry name" value="Ribosomal_uL1_CS"/>
</dbReference>
<dbReference type="NCBIfam" id="TIGR01169">
    <property type="entry name" value="rplA_bact"/>
    <property type="match status" value="1"/>
</dbReference>
<dbReference type="PANTHER" id="PTHR36427">
    <property type="entry name" value="54S RIBOSOMAL PROTEIN L1, MITOCHONDRIAL"/>
    <property type="match status" value="1"/>
</dbReference>
<dbReference type="PANTHER" id="PTHR36427:SF3">
    <property type="entry name" value="LARGE RIBOSOMAL SUBUNIT PROTEIN UL1M"/>
    <property type="match status" value="1"/>
</dbReference>
<dbReference type="Pfam" id="PF00687">
    <property type="entry name" value="Ribosomal_L1"/>
    <property type="match status" value="1"/>
</dbReference>
<dbReference type="PIRSF" id="PIRSF002155">
    <property type="entry name" value="Ribosomal_L1"/>
    <property type="match status" value="1"/>
</dbReference>
<dbReference type="SUPFAM" id="SSF56808">
    <property type="entry name" value="Ribosomal protein L1"/>
    <property type="match status" value="1"/>
</dbReference>
<dbReference type="PROSITE" id="PS01199">
    <property type="entry name" value="RIBOSOMAL_L1"/>
    <property type="match status" value="1"/>
</dbReference>
<sequence length="231" mass="24512">MSKLTKKQKKIAEVIKPNQLYTVADAVAILKQFASKKFRESLDISINLGVDPRKSDQVVRSSTNLPKGTGKTVRVAVFAQGDNAAKATAAGADIVGFEDLADKIKAGEMNFDVVIATPDAMRIVGQLGQILGPRGLMPNPKVGTVTTNVEAAVNDAKSGQVRYRTDKNGIIHCTVGKADFAPEDVLENVVALINDLKKAKPASSKGQYLKKISLSTTMGPGLPIDISSIPV</sequence>